<accession>A6MVV6</accession>
<feature type="chain" id="PRO_0000326024" description="Photosystem I assembly protein Ycf4">
    <location>
        <begin position="1"/>
        <end position="179"/>
    </location>
</feature>
<feature type="transmembrane region" description="Helical" evidence="1">
    <location>
        <begin position="21"/>
        <end position="41"/>
    </location>
</feature>
<feature type="transmembrane region" description="Helical" evidence="1">
    <location>
        <begin position="59"/>
        <end position="79"/>
    </location>
</feature>
<dbReference type="EMBL" id="EF508371">
    <property type="protein sequence ID" value="ABO70826.1"/>
    <property type="molecule type" value="Genomic_DNA"/>
</dbReference>
<dbReference type="RefSeq" id="YP_001293535.1">
    <property type="nucleotide sequence ID" value="NC_009573.1"/>
</dbReference>
<dbReference type="GeneID" id="5228633"/>
<dbReference type="GO" id="GO:0009535">
    <property type="term" value="C:chloroplast thylakoid membrane"/>
    <property type="evidence" value="ECO:0007669"/>
    <property type="project" value="UniProtKB-SubCell"/>
</dbReference>
<dbReference type="GO" id="GO:0009522">
    <property type="term" value="C:photosystem I"/>
    <property type="evidence" value="ECO:0007669"/>
    <property type="project" value="InterPro"/>
</dbReference>
<dbReference type="GO" id="GO:0015979">
    <property type="term" value="P:photosynthesis"/>
    <property type="evidence" value="ECO:0007669"/>
    <property type="project" value="UniProtKB-UniRule"/>
</dbReference>
<dbReference type="HAMAP" id="MF_00437">
    <property type="entry name" value="Ycf4"/>
    <property type="match status" value="1"/>
</dbReference>
<dbReference type="InterPro" id="IPR003359">
    <property type="entry name" value="PSI_Ycf4_assembly"/>
</dbReference>
<dbReference type="NCBIfam" id="NF002712">
    <property type="entry name" value="PRK02542.1"/>
    <property type="match status" value="1"/>
</dbReference>
<dbReference type="Pfam" id="PF02392">
    <property type="entry name" value="Ycf4"/>
    <property type="match status" value="1"/>
</dbReference>
<reference key="1">
    <citation type="journal article" date="2007" name="Mol. Biol. Evol.">
        <title>Plastid genome sequence of the cryptophyte alga Rhodomonas salina CCMP1319: lateral transfer of putative DNA replication machinery and a test of chromist plastid phylogeny.</title>
        <authorList>
            <person name="Khan H."/>
            <person name="Parks N."/>
            <person name="Kozera C."/>
            <person name="Curtis B.A."/>
            <person name="Parsons B.J."/>
            <person name="Bowman S."/>
            <person name="Archibald J.M."/>
        </authorList>
    </citation>
    <scope>NUCLEOTIDE SEQUENCE [LARGE SCALE GENOMIC DNA]</scope>
    <source>
        <strain>CCMP1319 / NEPCC76 / CS-174</strain>
    </source>
</reference>
<sequence>MQTRYDLILGSRRFSNYLWTLISFSGGIGFLLAGLSSYLGVQLLPFGNTETIVFIPQGIVMTFYGTIGILLSLFLLLNISLNVGGGYNSYDKSTGAIQIFRLGFPGKRRKILLQYKIQEIKSIKLSIAEGLNPKREIYLQTKDQRQIPLTRVGEPLLLSQIEEEAVELANFLNIPLEGL</sequence>
<name>YCF4_RHDSA</name>
<organism>
    <name type="scientific">Rhodomonas salina</name>
    <name type="common">Cryptomonas salina</name>
    <dbReference type="NCBI Taxonomy" id="52970"/>
    <lineage>
        <taxon>Eukaryota</taxon>
        <taxon>Cryptophyceae</taxon>
        <taxon>Pyrenomonadales</taxon>
        <taxon>Pyrenomonadaceae</taxon>
        <taxon>Rhodomonas</taxon>
    </lineage>
</organism>
<proteinExistence type="inferred from homology"/>
<gene>
    <name evidence="1" type="primary">ycf4</name>
</gene>
<geneLocation type="chloroplast"/>
<evidence type="ECO:0000255" key="1">
    <source>
        <dbReference type="HAMAP-Rule" id="MF_00437"/>
    </source>
</evidence>
<protein>
    <recommendedName>
        <fullName evidence="1">Photosystem I assembly protein Ycf4</fullName>
    </recommendedName>
</protein>
<comment type="function">
    <text evidence="1">Seems to be required for the assembly of the photosystem I complex.</text>
</comment>
<comment type="subcellular location">
    <subcellularLocation>
        <location evidence="1">Plastid</location>
        <location evidence="1">Chloroplast thylakoid membrane</location>
        <topology evidence="1">Multi-pass membrane protein</topology>
    </subcellularLocation>
</comment>
<comment type="similarity">
    <text evidence="1">Belongs to the Ycf4 family.</text>
</comment>
<keyword id="KW-0150">Chloroplast</keyword>
<keyword id="KW-0472">Membrane</keyword>
<keyword id="KW-0602">Photosynthesis</keyword>
<keyword id="KW-0934">Plastid</keyword>
<keyword id="KW-0793">Thylakoid</keyword>
<keyword id="KW-0812">Transmembrane</keyword>
<keyword id="KW-1133">Transmembrane helix</keyword>